<feature type="chain" id="PRO_0000266094" description="CTP synthase">
    <location>
        <begin position="1"/>
        <end position="546"/>
    </location>
</feature>
<feature type="domain" description="Glutamine amidotransferase type-1" evidence="1">
    <location>
        <begin position="290"/>
        <end position="542"/>
    </location>
</feature>
<feature type="region of interest" description="Amidoligase domain" evidence="1">
    <location>
        <begin position="1"/>
        <end position="265"/>
    </location>
</feature>
<feature type="active site" description="Nucleophile; for glutamine hydrolysis" evidence="1">
    <location>
        <position position="378"/>
    </location>
</feature>
<feature type="active site" evidence="1">
    <location>
        <position position="515"/>
    </location>
</feature>
<feature type="active site" evidence="1">
    <location>
        <position position="517"/>
    </location>
</feature>
<feature type="binding site" evidence="1">
    <location>
        <position position="13"/>
    </location>
    <ligand>
        <name>CTP</name>
        <dbReference type="ChEBI" id="CHEBI:37563"/>
        <note>allosteric inhibitor</note>
    </ligand>
</feature>
<feature type="binding site" evidence="1">
    <location>
        <position position="13"/>
    </location>
    <ligand>
        <name>UTP</name>
        <dbReference type="ChEBI" id="CHEBI:46398"/>
    </ligand>
</feature>
<feature type="binding site" evidence="1">
    <location>
        <begin position="14"/>
        <end position="19"/>
    </location>
    <ligand>
        <name>ATP</name>
        <dbReference type="ChEBI" id="CHEBI:30616"/>
    </ligand>
</feature>
<feature type="binding site" evidence="1">
    <location>
        <position position="71"/>
    </location>
    <ligand>
        <name>ATP</name>
        <dbReference type="ChEBI" id="CHEBI:30616"/>
    </ligand>
</feature>
<feature type="binding site" evidence="1">
    <location>
        <position position="71"/>
    </location>
    <ligand>
        <name>Mg(2+)</name>
        <dbReference type="ChEBI" id="CHEBI:18420"/>
    </ligand>
</feature>
<feature type="binding site" evidence="1">
    <location>
        <position position="139"/>
    </location>
    <ligand>
        <name>Mg(2+)</name>
        <dbReference type="ChEBI" id="CHEBI:18420"/>
    </ligand>
</feature>
<feature type="binding site" evidence="1">
    <location>
        <begin position="146"/>
        <end position="148"/>
    </location>
    <ligand>
        <name>CTP</name>
        <dbReference type="ChEBI" id="CHEBI:37563"/>
        <note>allosteric inhibitor</note>
    </ligand>
</feature>
<feature type="binding site" evidence="1">
    <location>
        <begin position="186"/>
        <end position="191"/>
    </location>
    <ligand>
        <name>CTP</name>
        <dbReference type="ChEBI" id="CHEBI:37563"/>
        <note>allosteric inhibitor</note>
    </ligand>
</feature>
<feature type="binding site" evidence="1">
    <location>
        <begin position="186"/>
        <end position="191"/>
    </location>
    <ligand>
        <name>UTP</name>
        <dbReference type="ChEBI" id="CHEBI:46398"/>
    </ligand>
</feature>
<feature type="binding site" evidence="1">
    <location>
        <position position="222"/>
    </location>
    <ligand>
        <name>CTP</name>
        <dbReference type="ChEBI" id="CHEBI:37563"/>
        <note>allosteric inhibitor</note>
    </ligand>
</feature>
<feature type="binding site" evidence="1">
    <location>
        <position position="222"/>
    </location>
    <ligand>
        <name>UTP</name>
        <dbReference type="ChEBI" id="CHEBI:46398"/>
    </ligand>
</feature>
<feature type="binding site" evidence="1">
    <location>
        <position position="351"/>
    </location>
    <ligand>
        <name>L-glutamine</name>
        <dbReference type="ChEBI" id="CHEBI:58359"/>
    </ligand>
</feature>
<feature type="binding site" evidence="1">
    <location>
        <begin position="379"/>
        <end position="382"/>
    </location>
    <ligand>
        <name>L-glutamine</name>
        <dbReference type="ChEBI" id="CHEBI:58359"/>
    </ligand>
</feature>
<feature type="binding site" evidence="1">
    <location>
        <position position="402"/>
    </location>
    <ligand>
        <name>L-glutamine</name>
        <dbReference type="ChEBI" id="CHEBI:58359"/>
    </ligand>
</feature>
<feature type="binding site" evidence="1">
    <location>
        <position position="469"/>
    </location>
    <ligand>
        <name>L-glutamine</name>
        <dbReference type="ChEBI" id="CHEBI:58359"/>
    </ligand>
</feature>
<keyword id="KW-0067">ATP-binding</keyword>
<keyword id="KW-0315">Glutamine amidotransferase</keyword>
<keyword id="KW-0436">Ligase</keyword>
<keyword id="KW-0460">Magnesium</keyword>
<keyword id="KW-0479">Metal-binding</keyword>
<keyword id="KW-0547">Nucleotide-binding</keyword>
<keyword id="KW-0665">Pyrimidine biosynthesis</keyword>
<keyword id="KW-1185">Reference proteome</keyword>
<reference key="1">
    <citation type="journal article" date="2003" name="Proc. Natl. Acad. Sci. U.S.A.">
        <title>The complete genome sequence of Chromobacterium violaceum reveals remarkable and exploitable bacterial adaptability.</title>
        <authorList>
            <person name="Vasconcelos A.T.R."/>
            <person name="de Almeida D.F."/>
            <person name="Hungria M."/>
            <person name="Guimaraes C.T."/>
            <person name="Antonio R.V."/>
            <person name="Almeida F.C."/>
            <person name="de Almeida L.G.P."/>
            <person name="de Almeida R."/>
            <person name="Alves-Gomes J.A."/>
            <person name="Andrade E.M."/>
            <person name="Araripe J."/>
            <person name="de Araujo M.F.F."/>
            <person name="Astolfi-Filho S."/>
            <person name="Azevedo V."/>
            <person name="Baptista A.J."/>
            <person name="Bataus L.A.M."/>
            <person name="Batista J.S."/>
            <person name="Belo A."/>
            <person name="van den Berg C."/>
            <person name="Bogo M."/>
            <person name="Bonatto S."/>
            <person name="Bordignon J."/>
            <person name="Brigido M.M."/>
            <person name="Brito C.A."/>
            <person name="Brocchi M."/>
            <person name="Burity H.A."/>
            <person name="Camargo A.A."/>
            <person name="Cardoso D.D.P."/>
            <person name="Carneiro N.P."/>
            <person name="Carraro D.M."/>
            <person name="Carvalho C.M.B."/>
            <person name="Cascardo J.C.M."/>
            <person name="Cavada B.S."/>
            <person name="Chueire L.M.O."/>
            <person name="Creczynski-Pasa T.B."/>
            <person name="Cunha-Junior N.C."/>
            <person name="Fagundes N."/>
            <person name="Falcao C.L."/>
            <person name="Fantinatti F."/>
            <person name="Farias I.P."/>
            <person name="Felipe M.S.S."/>
            <person name="Ferrari L.P."/>
            <person name="Ferro J.A."/>
            <person name="Ferro M.I.T."/>
            <person name="Franco G.R."/>
            <person name="Freitas N.S.A."/>
            <person name="Furlan L.R."/>
            <person name="Gazzinelli R.T."/>
            <person name="Gomes E.A."/>
            <person name="Goncalves P.R."/>
            <person name="Grangeiro T.B."/>
            <person name="Grattapaglia D."/>
            <person name="Grisard E.C."/>
            <person name="Hanna E.S."/>
            <person name="Jardim S.N."/>
            <person name="Laurino J."/>
            <person name="Leoi L.C.T."/>
            <person name="Lima L.F.A."/>
            <person name="Loureiro M.F."/>
            <person name="Lyra M.C.C.P."/>
            <person name="Madeira H.M.F."/>
            <person name="Manfio G.P."/>
            <person name="Maranhao A.Q."/>
            <person name="Martins W.S."/>
            <person name="di Mauro S.M.Z."/>
            <person name="de Medeiros S.R.B."/>
            <person name="Meissner R.V."/>
            <person name="Moreira M.A.M."/>
            <person name="Nascimento F.F."/>
            <person name="Nicolas M.F."/>
            <person name="Oliveira J.G."/>
            <person name="Oliveira S.C."/>
            <person name="Paixao R.F.C."/>
            <person name="Parente J.A."/>
            <person name="Pedrosa F.O."/>
            <person name="Pena S.D.J."/>
            <person name="Pereira J.O."/>
            <person name="Pereira M."/>
            <person name="Pinto L.S.R.C."/>
            <person name="Pinto L.S."/>
            <person name="Porto J.I.R."/>
            <person name="Potrich D.P."/>
            <person name="Ramalho-Neto C.E."/>
            <person name="Reis A.M.M."/>
            <person name="Rigo L.U."/>
            <person name="Rondinelli E."/>
            <person name="Santos E.B.P."/>
            <person name="Santos F.R."/>
            <person name="Schneider M.P.C."/>
            <person name="Seuanez H.N."/>
            <person name="Silva A.M.R."/>
            <person name="da Silva A.L.C."/>
            <person name="Silva D.W."/>
            <person name="Silva R."/>
            <person name="Simoes I.C."/>
            <person name="Simon D."/>
            <person name="Soares C.M.A."/>
            <person name="Soares R.B.A."/>
            <person name="Souza E.M."/>
            <person name="Souza K.R.L."/>
            <person name="Souza R.C."/>
            <person name="Steffens M.B.R."/>
            <person name="Steindel M."/>
            <person name="Teixeira S.R."/>
            <person name="Urmenyi T."/>
            <person name="Vettore A."/>
            <person name="Wassem R."/>
            <person name="Zaha A."/>
            <person name="Simpson A.J.G."/>
        </authorList>
    </citation>
    <scope>NUCLEOTIDE SEQUENCE [LARGE SCALE GENOMIC DNA]</scope>
    <source>
        <strain>ATCC 12472 / DSM 30191 / JCM 1249 / CCUG 213 / NBRC 12614 / NCIMB 9131 / NCTC 9757 / MK</strain>
    </source>
</reference>
<proteinExistence type="inferred from homology"/>
<evidence type="ECO:0000255" key="1">
    <source>
        <dbReference type="HAMAP-Rule" id="MF_01227"/>
    </source>
</evidence>
<name>PYRG_CHRVO</name>
<comment type="function">
    <text evidence="1">Catalyzes the ATP-dependent amination of UTP to CTP with either L-glutamine or ammonia as the source of nitrogen. Regulates intracellular CTP levels through interactions with the four ribonucleotide triphosphates.</text>
</comment>
<comment type="catalytic activity">
    <reaction evidence="1">
        <text>UTP + L-glutamine + ATP + H2O = CTP + L-glutamate + ADP + phosphate + 2 H(+)</text>
        <dbReference type="Rhea" id="RHEA:26426"/>
        <dbReference type="ChEBI" id="CHEBI:15377"/>
        <dbReference type="ChEBI" id="CHEBI:15378"/>
        <dbReference type="ChEBI" id="CHEBI:29985"/>
        <dbReference type="ChEBI" id="CHEBI:30616"/>
        <dbReference type="ChEBI" id="CHEBI:37563"/>
        <dbReference type="ChEBI" id="CHEBI:43474"/>
        <dbReference type="ChEBI" id="CHEBI:46398"/>
        <dbReference type="ChEBI" id="CHEBI:58359"/>
        <dbReference type="ChEBI" id="CHEBI:456216"/>
        <dbReference type="EC" id="6.3.4.2"/>
    </reaction>
</comment>
<comment type="catalytic activity">
    <reaction evidence="1">
        <text>L-glutamine + H2O = L-glutamate + NH4(+)</text>
        <dbReference type="Rhea" id="RHEA:15889"/>
        <dbReference type="ChEBI" id="CHEBI:15377"/>
        <dbReference type="ChEBI" id="CHEBI:28938"/>
        <dbReference type="ChEBI" id="CHEBI:29985"/>
        <dbReference type="ChEBI" id="CHEBI:58359"/>
    </reaction>
</comment>
<comment type="catalytic activity">
    <reaction evidence="1">
        <text>UTP + NH4(+) + ATP = CTP + ADP + phosphate + 2 H(+)</text>
        <dbReference type="Rhea" id="RHEA:16597"/>
        <dbReference type="ChEBI" id="CHEBI:15378"/>
        <dbReference type="ChEBI" id="CHEBI:28938"/>
        <dbReference type="ChEBI" id="CHEBI:30616"/>
        <dbReference type="ChEBI" id="CHEBI:37563"/>
        <dbReference type="ChEBI" id="CHEBI:43474"/>
        <dbReference type="ChEBI" id="CHEBI:46398"/>
        <dbReference type="ChEBI" id="CHEBI:456216"/>
    </reaction>
</comment>
<comment type="activity regulation">
    <text evidence="1">Allosterically activated by GTP, when glutamine is the substrate; GTP has no effect on the reaction when ammonia is the substrate. The allosteric effector GTP functions by stabilizing the protein conformation that binds the tetrahedral intermediate(s) formed during glutamine hydrolysis. Inhibited by the product CTP, via allosteric rather than competitive inhibition.</text>
</comment>
<comment type="pathway">
    <text evidence="1">Pyrimidine metabolism; CTP biosynthesis via de novo pathway; CTP from UDP: step 2/2.</text>
</comment>
<comment type="subunit">
    <text evidence="1">Homotetramer.</text>
</comment>
<comment type="miscellaneous">
    <text evidence="1">CTPSs have evolved a hybrid strategy for distinguishing between UTP and CTP. The overlapping regions of the product feedback inhibitory and substrate sites recognize a common feature in both compounds, the triphosphate moiety. To differentiate isosteric substrate and product pyrimidine rings, an additional pocket far from the expected kinase/ligase catalytic site, specifically recognizes the cytosine and ribose portions of the product inhibitor.</text>
</comment>
<comment type="similarity">
    <text evidence="1">Belongs to the CTP synthase family.</text>
</comment>
<gene>
    <name evidence="1" type="primary">pyrG</name>
    <name type="ordered locus">CV_3457</name>
</gene>
<sequence length="546" mass="60465">MTKYIFVTGGVVSSLGKGIAAASIAAILESRGLKVTMLKLDPYINVDPGTMSPFQHGEVFVTEDGAETDLDLGHYERFIHAKMKKSNNFTTGQVYESVITKERRGDYLGGTVQVIPHITDEIKLKMGEGAADADVAIVEIGGTVGDIESLPFLEAIRQMRSNHGRKNTLYVHLSYVPYIATAGEIKTKPTQHSVKELREIGIQPDILLCRMDRELPEDEKRKIALFCNVEENAVIGCYDSDSIYKVPGMLHAQGIDDIIAEQLQLDLPQADLSAWDRIIDAIEKPDHAIKIAMVGKYVDLTESYKSLTEALKHAGIHTRTKVDIIYVDSEEIERDGAESLRDMDAILVPGGFGKRGVEGKIKAVKFARENDIPYLGICLGMQIALIEYARDVAGMAGANSTEFDLDTNFPVVALIDEWVNHDGKIEKRDENSNMGGTMRLGGQQCDLVPGSLAARVYGSTEITERHRHRYEVNNYYIQRLEQAGLTISGRSAGHEKLVETIELTGHRWFFACQFHPEFTSTPRDGHPLFIAYVKAALAHQADKQAS</sequence>
<dbReference type="EC" id="6.3.4.2" evidence="1"/>
<dbReference type="EMBL" id="AE016825">
    <property type="protein sequence ID" value="AAQ61118.1"/>
    <property type="molecule type" value="Genomic_DNA"/>
</dbReference>
<dbReference type="RefSeq" id="WP_011137004.1">
    <property type="nucleotide sequence ID" value="NC_005085.1"/>
</dbReference>
<dbReference type="SMR" id="Q7NSG9"/>
<dbReference type="STRING" id="243365.CV_3457"/>
<dbReference type="KEGG" id="cvi:CV_3457"/>
<dbReference type="eggNOG" id="COG0504">
    <property type="taxonomic scope" value="Bacteria"/>
</dbReference>
<dbReference type="HOGENOM" id="CLU_011675_5_0_4"/>
<dbReference type="OrthoDB" id="9801107at2"/>
<dbReference type="UniPathway" id="UPA00159">
    <property type="reaction ID" value="UER00277"/>
</dbReference>
<dbReference type="Proteomes" id="UP000001424">
    <property type="component" value="Chromosome"/>
</dbReference>
<dbReference type="GO" id="GO:0005829">
    <property type="term" value="C:cytosol"/>
    <property type="evidence" value="ECO:0007669"/>
    <property type="project" value="TreeGrafter"/>
</dbReference>
<dbReference type="GO" id="GO:0005524">
    <property type="term" value="F:ATP binding"/>
    <property type="evidence" value="ECO:0007669"/>
    <property type="project" value="UniProtKB-KW"/>
</dbReference>
<dbReference type="GO" id="GO:0003883">
    <property type="term" value="F:CTP synthase activity"/>
    <property type="evidence" value="ECO:0007669"/>
    <property type="project" value="UniProtKB-UniRule"/>
</dbReference>
<dbReference type="GO" id="GO:0004359">
    <property type="term" value="F:glutaminase activity"/>
    <property type="evidence" value="ECO:0007669"/>
    <property type="project" value="RHEA"/>
</dbReference>
<dbReference type="GO" id="GO:0042802">
    <property type="term" value="F:identical protein binding"/>
    <property type="evidence" value="ECO:0007669"/>
    <property type="project" value="TreeGrafter"/>
</dbReference>
<dbReference type="GO" id="GO:0046872">
    <property type="term" value="F:metal ion binding"/>
    <property type="evidence" value="ECO:0007669"/>
    <property type="project" value="UniProtKB-KW"/>
</dbReference>
<dbReference type="GO" id="GO:0044210">
    <property type="term" value="P:'de novo' CTP biosynthetic process"/>
    <property type="evidence" value="ECO:0007669"/>
    <property type="project" value="UniProtKB-UniRule"/>
</dbReference>
<dbReference type="GO" id="GO:0019856">
    <property type="term" value="P:pyrimidine nucleobase biosynthetic process"/>
    <property type="evidence" value="ECO:0007669"/>
    <property type="project" value="TreeGrafter"/>
</dbReference>
<dbReference type="CDD" id="cd03113">
    <property type="entry name" value="CTPS_N"/>
    <property type="match status" value="1"/>
</dbReference>
<dbReference type="CDD" id="cd01746">
    <property type="entry name" value="GATase1_CTP_Synthase"/>
    <property type="match status" value="1"/>
</dbReference>
<dbReference type="FunFam" id="3.40.50.300:FF:000009">
    <property type="entry name" value="CTP synthase"/>
    <property type="match status" value="1"/>
</dbReference>
<dbReference type="FunFam" id="3.40.50.880:FF:000002">
    <property type="entry name" value="CTP synthase"/>
    <property type="match status" value="1"/>
</dbReference>
<dbReference type="Gene3D" id="3.40.50.880">
    <property type="match status" value="1"/>
</dbReference>
<dbReference type="Gene3D" id="3.40.50.300">
    <property type="entry name" value="P-loop containing nucleotide triphosphate hydrolases"/>
    <property type="match status" value="1"/>
</dbReference>
<dbReference type="HAMAP" id="MF_01227">
    <property type="entry name" value="PyrG"/>
    <property type="match status" value="1"/>
</dbReference>
<dbReference type="InterPro" id="IPR029062">
    <property type="entry name" value="Class_I_gatase-like"/>
</dbReference>
<dbReference type="InterPro" id="IPR004468">
    <property type="entry name" value="CTP_synthase"/>
</dbReference>
<dbReference type="InterPro" id="IPR017456">
    <property type="entry name" value="CTP_synthase_N"/>
</dbReference>
<dbReference type="InterPro" id="IPR017926">
    <property type="entry name" value="GATASE"/>
</dbReference>
<dbReference type="InterPro" id="IPR033828">
    <property type="entry name" value="GATase1_CTP_Synthase"/>
</dbReference>
<dbReference type="InterPro" id="IPR027417">
    <property type="entry name" value="P-loop_NTPase"/>
</dbReference>
<dbReference type="NCBIfam" id="NF003792">
    <property type="entry name" value="PRK05380.1"/>
    <property type="match status" value="1"/>
</dbReference>
<dbReference type="NCBIfam" id="TIGR00337">
    <property type="entry name" value="PyrG"/>
    <property type="match status" value="1"/>
</dbReference>
<dbReference type="PANTHER" id="PTHR11550">
    <property type="entry name" value="CTP SYNTHASE"/>
    <property type="match status" value="1"/>
</dbReference>
<dbReference type="PANTHER" id="PTHR11550:SF0">
    <property type="entry name" value="CTP SYNTHASE-RELATED"/>
    <property type="match status" value="1"/>
</dbReference>
<dbReference type="Pfam" id="PF06418">
    <property type="entry name" value="CTP_synth_N"/>
    <property type="match status" value="1"/>
</dbReference>
<dbReference type="Pfam" id="PF00117">
    <property type="entry name" value="GATase"/>
    <property type="match status" value="1"/>
</dbReference>
<dbReference type="SUPFAM" id="SSF52317">
    <property type="entry name" value="Class I glutamine amidotransferase-like"/>
    <property type="match status" value="1"/>
</dbReference>
<dbReference type="SUPFAM" id="SSF52540">
    <property type="entry name" value="P-loop containing nucleoside triphosphate hydrolases"/>
    <property type="match status" value="1"/>
</dbReference>
<dbReference type="PROSITE" id="PS51273">
    <property type="entry name" value="GATASE_TYPE_1"/>
    <property type="match status" value="1"/>
</dbReference>
<protein>
    <recommendedName>
        <fullName evidence="1">CTP synthase</fullName>
        <ecNumber evidence="1">6.3.4.2</ecNumber>
    </recommendedName>
    <alternativeName>
        <fullName evidence="1">Cytidine 5'-triphosphate synthase</fullName>
    </alternativeName>
    <alternativeName>
        <fullName evidence="1">Cytidine triphosphate synthetase</fullName>
        <shortName evidence="1">CTP synthetase</shortName>
        <shortName evidence="1">CTPS</shortName>
    </alternativeName>
    <alternativeName>
        <fullName evidence="1">UTP--ammonia ligase</fullName>
    </alternativeName>
</protein>
<accession>Q7NSG9</accession>
<organism>
    <name type="scientific">Chromobacterium violaceum (strain ATCC 12472 / DSM 30191 / JCM 1249 / CCUG 213 / NBRC 12614 / NCIMB 9131 / NCTC 9757 / MK)</name>
    <dbReference type="NCBI Taxonomy" id="243365"/>
    <lineage>
        <taxon>Bacteria</taxon>
        <taxon>Pseudomonadati</taxon>
        <taxon>Pseudomonadota</taxon>
        <taxon>Betaproteobacteria</taxon>
        <taxon>Neisseriales</taxon>
        <taxon>Chromobacteriaceae</taxon>
        <taxon>Chromobacterium</taxon>
    </lineage>
</organism>